<keyword id="KW-0145">Chemotaxis</keyword>
<keyword id="KW-0202">Cytokine</keyword>
<keyword id="KW-1015">Disulfide bond</keyword>
<keyword id="KW-0395">Inflammatory response</keyword>
<keyword id="KW-1185">Reference proteome</keyword>
<keyword id="KW-0964">Secreted</keyword>
<keyword id="KW-0732">Signal</keyword>
<proteinExistence type="inferred from homology"/>
<accession>Q8HYQ3</accession>
<accession>Q8HYN4</accession>
<feature type="signal peptide" evidence="3">
    <location>
        <begin position="1"/>
        <end position="26"/>
    </location>
</feature>
<feature type="chain" id="PRO_0000042848" description="C-C motif chemokine 3">
    <location>
        <begin position="27"/>
        <end position="92"/>
    </location>
</feature>
<feature type="site" description="Involved in GAG binding" evidence="1">
    <location>
        <position position="40"/>
    </location>
</feature>
<feature type="site" description="Involved in GAG binding" evidence="1">
    <location>
        <position position="68"/>
    </location>
</feature>
<feature type="site" description="Involved in GAG binding" evidence="1">
    <location>
        <position position="70"/>
    </location>
</feature>
<feature type="disulfide bond" evidence="2">
    <location>
        <begin position="33"/>
        <end position="57"/>
    </location>
</feature>
<feature type="disulfide bond" evidence="2">
    <location>
        <begin position="34"/>
        <end position="73"/>
    </location>
</feature>
<feature type="sequence conflict" description="In Ref. 2; AAN76985." evidence="4" ref="2">
    <original>S</original>
    <variation>A</variation>
    <location>
        <position position="32"/>
    </location>
</feature>
<feature type="sequence conflict" description="In Ref. 2; AAN76985." evidence="4" ref="2">
    <original>I</original>
    <variation>T</variation>
    <location>
        <position position="38"/>
    </location>
</feature>
<feature type="sequence conflict" description="In Ref. 2; AAN76985." evidence="4" ref="2">
    <original>N</original>
    <variation>S</variation>
    <location>
        <position position="54"/>
    </location>
</feature>
<feature type="sequence conflict" description="In Ref. 2; AAN76985." evidence="4" ref="2">
    <original>G</original>
    <variation>S</variation>
    <location>
        <position position="69"/>
    </location>
</feature>
<feature type="sequence conflict" description="In Ref. 2; AAN76985." evidence="4" ref="2">
    <original>K</original>
    <variation>E</variation>
    <location>
        <position position="78"/>
    </location>
</feature>
<dbReference type="EMBL" id="AF449266">
    <property type="protein sequence ID" value="AAN76070.1"/>
    <property type="molecule type" value="mRNA"/>
</dbReference>
<dbReference type="EMBL" id="AF457195">
    <property type="protein sequence ID" value="AAN76985.1"/>
    <property type="molecule type" value="mRNA"/>
</dbReference>
<dbReference type="RefSeq" id="NP_001029372.1">
    <property type="nucleotide sequence ID" value="NM_001034200.1"/>
</dbReference>
<dbReference type="SMR" id="Q8HYQ3"/>
<dbReference type="FunCoup" id="Q8HYQ3">
    <property type="interactions" value="664"/>
</dbReference>
<dbReference type="STRING" id="9544.ENSMMUP00000066321"/>
<dbReference type="PaxDb" id="9544-ENSMMUP00000001262"/>
<dbReference type="Ensembl" id="ENSMMUT00000099823.1">
    <property type="protein sequence ID" value="ENSMMUP00000066321.1"/>
    <property type="gene ID" value="ENSMMUG00000062832.1"/>
</dbReference>
<dbReference type="GeneID" id="619514"/>
<dbReference type="KEGG" id="mcc:619514"/>
<dbReference type="CTD" id="6348"/>
<dbReference type="VEuPathDB" id="HostDB:ENSMMUG00000062832"/>
<dbReference type="eggNOG" id="ENOG502SAF0">
    <property type="taxonomic scope" value="Eukaryota"/>
</dbReference>
<dbReference type="GeneTree" id="ENSGT01100000263482"/>
<dbReference type="HOGENOM" id="CLU_141716_4_0_1"/>
<dbReference type="InParanoid" id="Q8HYQ3"/>
<dbReference type="OMA" id="WVQALLE"/>
<dbReference type="OrthoDB" id="8934837at2759"/>
<dbReference type="TreeFam" id="TF334888"/>
<dbReference type="Proteomes" id="UP000006718">
    <property type="component" value="Chromosome 16"/>
</dbReference>
<dbReference type="Bgee" id="ENSMMUG00000062832">
    <property type="expression patterns" value="Expressed in spleen and 10 other cell types or tissues"/>
</dbReference>
<dbReference type="GO" id="GO:0005737">
    <property type="term" value="C:cytoplasm"/>
    <property type="evidence" value="ECO:0000250"/>
    <property type="project" value="UniProtKB"/>
</dbReference>
<dbReference type="GO" id="GO:0005829">
    <property type="term" value="C:cytosol"/>
    <property type="evidence" value="ECO:0000250"/>
    <property type="project" value="UniProtKB"/>
</dbReference>
<dbReference type="GO" id="GO:0005615">
    <property type="term" value="C:extracellular space"/>
    <property type="evidence" value="ECO:0000250"/>
    <property type="project" value="UniProtKB"/>
</dbReference>
<dbReference type="GO" id="GO:0048020">
    <property type="term" value="F:CCR chemokine receptor binding"/>
    <property type="evidence" value="ECO:0000318"/>
    <property type="project" value="GO_Central"/>
</dbReference>
<dbReference type="GO" id="GO:0042056">
    <property type="term" value="F:chemoattractant activity"/>
    <property type="evidence" value="ECO:0000250"/>
    <property type="project" value="UniProtKB"/>
</dbReference>
<dbReference type="GO" id="GO:0008009">
    <property type="term" value="F:chemokine activity"/>
    <property type="evidence" value="ECO:0000250"/>
    <property type="project" value="UniProtKB"/>
</dbReference>
<dbReference type="GO" id="GO:0016301">
    <property type="term" value="F:kinase activity"/>
    <property type="evidence" value="ECO:0000250"/>
    <property type="project" value="UniProtKB"/>
</dbReference>
<dbReference type="GO" id="GO:0016004">
    <property type="term" value="F:phospholipase activator activity"/>
    <property type="evidence" value="ECO:0000250"/>
    <property type="project" value="UniProtKB"/>
</dbReference>
<dbReference type="GO" id="GO:0004672">
    <property type="term" value="F:protein kinase activity"/>
    <property type="evidence" value="ECO:0000250"/>
    <property type="project" value="UniProtKB"/>
</dbReference>
<dbReference type="GO" id="GO:0061844">
    <property type="term" value="P:antimicrobial humoral immune response mediated by antimicrobial peptide"/>
    <property type="evidence" value="ECO:0000318"/>
    <property type="project" value="GO_Central"/>
</dbReference>
<dbReference type="GO" id="GO:0043615">
    <property type="term" value="P:astrocyte cell migration"/>
    <property type="evidence" value="ECO:0000250"/>
    <property type="project" value="UniProtKB"/>
</dbReference>
<dbReference type="GO" id="GO:0006816">
    <property type="term" value="P:calcium ion transport"/>
    <property type="evidence" value="ECO:0000250"/>
    <property type="project" value="UniProtKB"/>
</dbReference>
<dbReference type="GO" id="GO:0019722">
    <property type="term" value="P:calcium-mediated signaling"/>
    <property type="evidence" value="ECO:0000250"/>
    <property type="project" value="UniProtKB"/>
</dbReference>
<dbReference type="GO" id="GO:0001775">
    <property type="term" value="P:cell activation"/>
    <property type="evidence" value="ECO:0000250"/>
    <property type="project" value="UniProtKB"/>
</dbReference>
<dbReference type="GO" id="GO:0060326">
    <property type="term" value="P:cell chemotaxis"/>
    <property type="evidence" value="ECO:0000318"/>
    <property type="project" value="GO_Central"/>
</dbReference>
<dbReference type="GO" id="GO:0007267">
    <property type="term" value="P:cell-cell signaling"/>
    <property type="evidence" value="ECO:0000250"/>
    <property type="project" value="UniProtKB"/>
</dbReference>
<dbReference type="GO" id="GO:0070098">
    <property type="term" value="P:chemokine-mediated signaling pathway"/>
    <property type="evidence" value="ECO:0000318"/>
    <property type="project" value="GO_Central"/>
</dbReference>
<dbReference type="GO" id="GO:0006935">
    <property type="term" value="P:chemotaxis"/>
    <property type="evidence" value="ECO:0000250"/>
    <property type="project" value="UniProtKB"/>
</dbReference>
<dbReference type="GO" id="GO:0007010">
    <property type="term" value="P:cytoskeleton organization"/>
    <property type="evidence" value="ECO:0000250"/>
    <property type="project" value="UniProtKB"/>
</dbReference>
<dbReference type="GO" id="GO:0048245">
    <property type="term" value="P:eosinophil chemotaxis"/>
    <property type="evidence" value="ECO:0000250"/>
    <property type="project" value="UniProtKB"/>
</dbReference>
<dbReference type="GO" id="GO:0043308">
    <property type="term" value="P:eosinophil degranulation"/>
    <property type="evidence" value="ECO:0000250"/>
    <property type="project" value="UniProtKB"/>
</dbReference>
<dbReference type="GO" id="GO:0006887">
    <property type="term" value="P:exocytosis"/>
    <property type="evidence" value="ECO:0000250"/>
    <property type="project" value="UniProtKB"/>
</dbReference>
<dbReference type="GO" id="GO:0071621">
    <property type="term" value="P:granulocyte chemotaxis"/>
    <property type="evidence" value="ECO:0000250"/>
    <property type="project" value="UniProtKB"/>
</dbReference>
<dbReference type="GO" id="GO:0006954">
    <property type="term" value="P:inflammatory response"/>
    <property type="evidence" value="ECO:0000250"/>
    <property type="project" value="UniProtKB"/>
</dbReference>
<dbReference type="GO" id="GO:0006874">
    <property type="term" value="P:intracellular calcium ion homeostasis"/>
    <property type="evidence" value="ECO:0000250"/>
    <property type="project" value="UniProtKB"/>
</dbReference>
<dbReference type="GO" id="GO:0048247">
    <property type="term" value="P:lymphocyte chemotaxis"/>
    <property type="evidence" value="ECO:0000250"/>
    <property type="project" value="UniProtKB"/>
</dbReference>
<dbReference type="GO" id="GO:0048246">
    <property type="term" value="P:macrophage chemotaxis"/>
    <property type="evidence" value="ECO:0000250"/>
    <property type="project" value="UniProtKB"/>
</dbReference>
<dbReference type="GO" id="GO:0002548">
    <property type="term" value="P:monocyte chemotaxis"/>
    <property type="evidence" value="ECO:0000250"/>
    <property type="project" value="UniProtKB"/>
</dbReference>
<dbReference type="GO" id="GO:0043922">
    <property type="term" value="P:negative regulation by host of viral transcription"/>
    <property type="evidence" value="ECO:0000250"/>
    <property type="project" value="UniProtKB"/>
</dbReference>
<dbReference type="GO" id="GO:0010629">
    <property type="term" value="P:negative regulation of gene expression"/>
    <property type="evidence" value="ECO:0000250"/>
    <property type="project" value="UniProtKB"/>
</dbReference>
<dbReference type="GO" id="GO:0045671">
    <property type="term" value="P:negative regulation of osteoclast differentiation"/>
    <property type="evidence" value="ECO:0000250"/>
    <property type="project" value="UniProtKB"/>
</dbReference>
<dbReference type="GO" id="GO:0030593">
    <property type="term" value="P:neutrophil chemotaxis"/>
    <property type="evidence" value="ECO:0000250"/>
    <property type="project" value="UniProtKB"/>
</dbReference>
<dbReference type="GO" id="GO:0001649">
    <property type="term" value="P:osteoblast differentiation"/>
    <property type="evidence" value="ECO:0000250"/>
    <property type="project" value="UniProtKB"/>
</dbReference>
<dbReference type="GO" id="GO:0051928">
    <property type="term" value="P:positive regulation of calcium ion transport"/>
    <property type="evidence" value="ECO:0000250"/>
    <property type="project" value="UniProtKB"/>
</dbReference>
<dbReference type="GO" id="GO:0050850">
    <property type="term" value="P:positive regulation of calcium-mediated signaling"/>
    <property type="evidence" value="ECO:0000250"/>
    <property type="project" value="UniProtKB"/>
</dbReference>
<dbReference type="GO" id="GO:0030335">
    <property type="term" value="P:positive regulation of cell migration"/>
    <property type="evidence" value="ECO:0000250"/>
    <property type="project" value="UniProtKB"/>
</dbReference>
<dbReference type="GO" id="GO:0070374">
    <property type="term" value="P:positive regulation of ERK1 and ERK2 cascade"/>
    <property type="evidence" value="ECO:0000250"/>
    <property type="project" value="UniProtKB"/>
</dbReference>
<dbReference type="GO" id="GO:0010628">
    <property type="term" value="P:positive regulation of gene expression"/>
    <property type="evidence" value="ECO:0000250"/>
    <property type="project" value="UniProtKB"/>
</dbReference>
<dbReference type="GO" id="GO:0050729">
    <property type="term" value="P:positive regulation of inflammatory response"/>
    <property type="evidence" value="ECO:0000250"/>
    <property type="project" value="UniProtKB"/>
</dbReference>
<dbReference type="GO" id="GO:0032731">
    <property type="term" value="P:positive regulation of interleukin-1 beta production"/>
    <property type="evidence" value="ECO:0000250"/>
    <property type="project" value="UniProtKB"/>
</dbReference>
<dbReference type="GO" id="GO:2000503">
    <property type="term" value="P:positive regulation of natural killer cell chemotaxis"/>
    <property type="evidence" value="ECO:0000250"/>
    <property type="project" value="UniProtKB"/>
</dbReference>
<dbReference type="GO" id="GO:0043525">
    <property type="term" value="P:positive regulation of neuron apoptotic process"/>
    <property type="evidence" value="ECO:0000250"/>
    <property type="project" value="UniProtKB"/>
</dbReference>
<dbReference type="GO" id="GO:0032760">
    <property type="term" value="P:positive regulation of tumor necrosis factor production"/>
    <property type="evidence" value="ECO:0000250"/>
    <property type="project" value="UniProtKB"/>
</dbReference>
<dbReference type="GO" id="GO:0050795">
    <property type="term" value="P:regulation of behavior"/>
    <property type="evidence" value="ECO:0000250"/>
    <property type="project" value="UniProtKB"/>
</dbReference>
<dbReference type="GO" id="GO:0008360">
    <property type="term" value="P:regulation of cell shape"/>
    <property type="evidence" value="ECO:0000250"/>
    <property type="project" value="UniProtKB"/>
</dbReference>
<dbReference type="GO" id="GO:0051930">
    <property type="term" value="P:regulation of sensory perception of pain"/>
    <property type="evidence" value="ECO:0000250"/>
    <property type="project" value="UniProtKB"/>
</dbReference>
<dbReference type="GO" id="GO:0014808">
    <property type="term" value="P:release of sequestered calcium ion into cytosol by sarcoplasmic reticulum"/>
    <property type="evidence" value="ECO:0000250"/>
    <property type="project" value="UniProtKB"/>
</dbReference>
<dbReference type="GO" id="GO:0070723">
    <property type="term" value="P:response to cholesterol"/>
    <property type="evidence" value="ECO:0000250"/>
    <property type="project" value="UniProtKB"/>
</dbReference>
<dbReference type="GO" id="GO:0009636">
    <property type="term" value="P:response to toxic substance"/>
    <property type="evidence" value="ECO:0000250"/>
    <property type="project" value="UniProtKB"/>
</dbReference>
<dbReference type="GO" id="GO:0023052">
    <property type="term" value="P:signaling"/>
    <property type="evidence" value="ECO:0000250"/>
    <property type="project" value="UniProtKB"/>
</dbReference>
<dbReference type="GO" id="GO:0010818">
    <property type="term" value="P:T cell chemotaxis"/>
    <property type="evidence" value="ECO:0000250"/>
    <property type="project" value="UniProtKB"/>
</dbReference>
<dbReference type="CDD" id="cd00272">
    <property type="entry name" value="Chemokine_CC"/>
    <property type="match status" value="1"/>
</dbReference>
<dbReference type="FunFam" id="2.40.50.40:FF:000002">
    <property type="entry name" value="C-C motif chemokine"/>
    <property type="match status" value="1"/>
</dbReference>
<dbReference type="Gene3D" id="2.40.50.40">
    <property type="match status" value="1"/>
</dbReference>
<dbReference type="InterPro" id="IPR039809">
    <property type="entry name" value="Chemokine_b/g/d"/>
</dbReference>
<dbReference type="InterPro" id="IPR000827">
    <property type="entry name" value="Chemokine_CC_CS"/>
</dbReference>
<dbReference type="InterPro" id="IPR001811">
    <property type="entry name" value="Chemokine_IL8-like_dom"/>
</dbReference>
<dbReference type="InterPro" id="IPR036048">
    <property type="entry name" value="Interleukin_8-like_sf"/>
</dbReference>
<dbReference type="PANTHER" id="PTHR12015:SF183">
    <property type="entry name" value="C-C MOTIF CHEMOKINE 3"/>
    <property type="match status" value="1"/>
</dbReference>
<dbReference type="PANTHER" id="PTHR12015">
    <property type="entry name" value="SMALL INDUCIBLE CYTOKINE A"/>
    <property type="match status" value="1"/>
</dbReference>
<dbReference type="Pfam" id="PF00048">
    <property type="entry name" value="IL8"/>
    <property type="match status" value="1"/>
</dbReference>
<dbReference type="SMART" id="SM00199">
    <property type="entry name" value="SCY"/>
    <property type="match status" value="1"/>
</dbReference>
<dbReference type="SUPFAM" id="SSF54117">
    <property type="entry name" value="Interleukin 8-like chemokines"/>
    <property type="match status" value="1"/>
</dbReference>
<dbReference type="PROSITE" id="PS00472">
    <property type="entry name" value="SMALL_CYTOKINES_CC"/>
    <property type="match status" value="1"/>
</dbReference>
<organism>
    <name type="scientific">Macaca mulatta</name>
    <name type="common">Rhesus macaque</name>
    <dbReference type="NCBI Taxonomy" id="9544"/>
    <lineage>
        <taxon>Eukaryota</taxon>
        <taxon>Metazoa</taxon>
        <taxon>Chordata</taxon>
        <taxon>Craniata</taxon>
        <taxon>Vertebrata</taxon>
        <taxon>Euteleostomi</taxon>
        <taxon>Mammalia</taxon>
        <taxon>Eutheria</taxon>
        <taxon>Euarchontoglires</taxon>
        <taxon>Primates</taxon>
        <taxon>Haplorrhini</taxon>
        <taxon>Catarrhini</taxon>
        <taxon>Cercopithecidae</taxon>
        <taxon>Cercopithecinae</taxon>
        <taxon>Macaca</taxon>
    </lineage>
</organism>
<comment type="function">
    <text evidence="2">Monokine with inflammatory and chemokinetic properties. Binds to CCR1, CCR4 and CCR5. One of the major HIV-suppressive factors produced by CD8+ T-cells. Recombinant MIP-1-alpha induces a dose-dependent inhibition of different strains of HIV-1, HIV-2, and simian immunodeficiency virus (SIV).</text>
</comment>
<comment type="subunit">
    <text evidence="2">Self-associates. Also heterodimer of MIP-1-alpha(4-69) and MIP-1-beta(3-69). Interacts with CCR1.</text>
</comment>
<comment type="subcellular location">
    <subcellularLocation>
        <location evidence="1">Secreted</location>
    </subcellularLocation>
</comment>
<comment type="similarity">
    <text evidence="4">Belongs to the intercrine beta (chemokine CC) family.</text>
</comment>
<evidence type="ECO:0000250" key="1"/>
<evidence type="ECO:0000250" key="2">
    <source>
        <dbReference type="UniProtKB" id="P10147"/>
    </source>
</evidence>
<evidence type="ECO:0000255" key="3"/>
<evidence type="ECO:0000305" key="4"/>
<name>CCL3_MACMU</name>
<gene>
    <name type="primary">CCL3</name>
    <name type="synonym">MIP1A</name>
</gene>
<reference key="1">
    <citation type="journal article" date="2002" name="Cytokine">
        <title>Molecular cloning and sequencing of 25 different rhesus macaque chemokine cDNAs reveals evolutionary conservation among C, CC, CXC, and CX3C families of chemokines.</title>
        <authorList>
            <person name="Basu S."/>
            <person name="Schaefer T.M."/>
            <person name="Ghosh M."/>
            <person name="Fuller C.L."/>
            <person name="Reinhart T.A."/>
        </authorList>
    </citation>
    <scope>NUCLEOTIDE SEQUENCE [MRNA]</scope>
</reference>
<reference key="2">
    <citation type="journal article" date="2002" name="AIDS Res. Hum. Retroviruses">
        <title>Quantitation of simian cytokine and beta-chemokine mRNAs, using real-time reverse transcriptase-polymerase chain reaction: variations in expression during chronic primate lentivirus infection.</title>
        <authorList>
            <person name="Hofmann-Lehmann R."/>
            <person name="Williams A.L."/>
            <person name="Swenerton R.K."/>
            <person name="Li P.-L."/>
            <person name="Rasmussen R.A."/>
            <person name="Chenine A.-L."/>
            <person name="McClure H.M."/>
            <person name="Ruprecht R.M."/>
        </authorList>
    </citation>
    <scope>NUCLEOTIDE SEQUENCE [MRNA] OF 30-85</scope>
</reference>
<protein>
    <recommendedName>
        <fullName>C-C motif chemokine 3</fullName>
    </recommendedName>
    <alternativeName>
        <fullName>Macrophage inflammatory protein 1-alpha</fullName>
        <shortName>MIP-1-alpha</shortName>
    </alternativeName>
    <alternativeName>
        <fullName>Small-inducible cytokine A3</fullName>
    </alternativeName>
</protein>
<sequence length="92" mass="10120">MQVSTAALAVLLCTVALCNRISATFAADTPTSCCFSYISRQIPQNFIADYFETNSQCSKPGVIFLTKRGRQVCADPSKEWVQKYVSDLELSA</sequence>